<gene>
    <name evidence="4" type="primary">dtcA</name>
    <name evidence="5" type="synonym">P698DRAFT_02038</name>
</gene>
<sequence>MNKKHSSPAQKKISQQVVFQRRINASKNIEQASNVCFSVLAKSMRKDSFTEFLYMFRNFLDLPVAKNIMNYRYKGDTIDIFNIKTMPFEMLEIRDVVKWLTEIFGYFSEDLNDFVKAKVAITNNILLADFEGAKRNLEKFIDDHGVCNWTIATELSLLYFQGKITEYKDKIKEFTHIEDGLSQSFLTYEGIRCNPSVTSERYRFSIGKMIEEVRIDNQPQLEETIKYRHDFSPCDVYSNMDFIFSNTCEKRIFDMYNSFKRFIFYKYNDGSDISEIVTCVEKLTNSIHDSEIEIFYKRISGTESDIKDEQYNEVIDNYINNNYERVITQSEKILLEKPYFSVIYLPYIKSLVRKKQNTSLPGPIGEIIRLSCNLFSNIEFEDSLKKLSKIYYVLLHNDWVHIIGCILDNFDGSDGINNPKRYNYVDSLLLINNKLSFRDSTNFKWLDDENISAWRRDKIKADKYFYDGEYGKALNLYSNSLDKSEKNYIEELKAKIIYCHFSLGEISVAITILSELLSKGANPRTLPINTVAEYVAKEGHYKTNNDELYNEAIILNAYNKNIIAKYIQHTSNVCENFLENIDVTDKNQITFENESIPAFFLTELLSIDVLEGMTSIIESEVDVLLTRLNIDRYIVTNEEKFDSKTVRKSKNEITNIFYKLIVQACSNEAGEGRIYVDKSSLKAKLINDVERELEILRGSDNKELNTYVELTDDHGIEYHTMSTPFMRDVFDLMMKVSDGYTIDKLYGIDQSLNVGIRHGGIVNLLWAPLKNNGIAALKSKDSKFIPNPVWRNDFGYYNKGFLDSIDKNLVLLNEKLNTIINDAKEKVHINTGEFIESAKVFNYAIEIEFVEEMAGSIDKIDGDTFIELIFNYLDEKTNDCLDYAKNNFIPKLRHEMIDAIQNTRNEIKIENINRAISQSKIQLEESIEFLQSWFNWSGTSKTPFALKAAIEKSRLILSKLHPWLEINFSGSLNTQKIFLGKHFTPIVTLLTLIFENVVKHGANRDSTEIIVDINENNDVIELSFVNKVQEPFNQDELEKFSRINEILDTEYETYSARETGSGIFKIKKILSLELKCKNHVHIHPTENSFGITIGIYDNGGMFE</sequence>
<accession>P0DW71</accession>
<name>DTCA_ENTC6</name>
<feature type="chain" id="PRO_0000459334" description="Detocs histidine-protein kinase DtcA">
    <location>
        <begin position="1"/>
        <end position="1103"/>
    </location>
</feature>
<feature type="repeat" description="TPR" evidence="2">
    <location>
        <begin position="818"/>
        <end position="851"/>
    </location>
</feature>
<feature type="modified residue" description="Phosphohistidine; by autocatalysis" evidence="1 6">
    <location>
        <position position="758"/>
    </location>
</feature>
<evidence type="ECO:0000250" key="1">
    <source>
        <dbReference type="UniProtKB" id="P0DW68"/>
    </source>
</evidence>
<evidence type="ECO:0000255" key="2"/>
<evidence type="ECO:0000269" key="3">
    <source>
    </source>
</evidence>
<evidence type="ECO:0000303" key="4">
    <source>
    </source>
</evidence>
<evidence type="ECO:0000305" key="5"/>
<evidence type="ECO:0000305" key="6">
    <source>
    </source>
</evidence>
<organism>
    <name type="scientific">Enterobacter cloacae (strain JD6301)</name>
    <dbReference type="NCBI Taxonomy" id="1399774"/>
    <lineage>
        <taxon>Bacteria</taxon>
        <taxon>Pseudomonadati</taxon>
        <taxon>Pseudomonadota</taxon>
        <taxon>Gammaproteobacteria</taxon>
        <taxon>Enterobacterales</taxon>
        <taxon>Enterobacteriaceae</taxon>
        <taxon>Enterobacter</taxon>
        <taxon>Enterobacter cloacae complex</taxon>
    </lineage>
</organism>
<comment type="function">
    <text evidence="3 6">Sensor-kinase member of the two-component regulatory system Detocs that confers resistance to bacteriophage (PubMed:37595565). When the system (DtcA-DtcB-DtcC) is expressed in a susceptible E.coli (strain MG1655) it confers resistance to bacteriophages T2, T4, T5, T7, SECphi4, SECphi6 and SECphi27; the level of resistance varies, resistance to T2, T7 and SECphi4 is not very high (PubMed:37595565). DtcA (this subunit) probably autophosphorylates upon sensing viral infection, and subsequently transfers the phosphate signal to DtcC which activates it, leading to an antiviral defense; DtcB may scavenge phosphorylation signals from accidental activation of DtcA (Probable) (PubMed:37595565).</text>
</comment>
<comment type="catalytic activity">
    <reaction evidence="6">
        <text>ATP + protein L-histidine = ADP + protein N-phospho-L-histidine.</text>
        <dbReference type="EC" id="2.7.13.3"/>
    </reaction>
</comment>
<comment type="PTM">
    <text evidence="6">Autophosphorylated.</text>
</comment>
<protein>
    <recommendedName>
        <fullName evidence="5">Detocs histidine-protein kinase DtcA</fullName>
        <ecNumber evidence="6">2.7.13.3</ecNumber>
    </recommendedName>
    <alternativeName>
        <fullName evidence="4">Sensor kinase DtcA</fullName>
    </alternativeName>
</protein>
<keyword id="KW-0051">Antiviral defense</keyword>
<keyword id="KW-0597">Phosphoprotein</keyword>
<keyword id="KW-0802">TPR repeat</keyword>
<keyword id="KW-0808">Transferase</keyword>
<keyword id="KW-0902">Two-component regulatory system</keyword>
<reference key="1">
    <citation type="journal article" date="2014" name="Genome Announc.">
        <title>Draft Genome Sequence of Enterobacter cloacae Strain JD6301.</title>
        <authorList>
            <person name="Wilson J.G."/>
            <person name="French W.T."/>
            <person name="Lipzen A."/>
            <person name="Martin J."/>
            <person name="Schackwitz W."/>
            <person name="Woyke T."/>
            <person name="Shapiro N."/>
            <person name="Bullard J.W."/>
            <person name="Champlin F.R."/>
            <person name="Donaldson J.R."/>
        </authorList>
    </citation>
    <scope>NUCLEOTIDE SEQUENCE [LARGE SCALE GENOMIC DNA]</scope>
    <source>
        <strain>JD6301</strain>
    </source>
</reference>
<reference key="2">
    <citation type="journal article" date="2023" name="Cell">
        <title>A conserved family of immune effectors cleaves cellular ATP upon viral infection.</title>
        <authorList>
            <person name="Rousset F."/>
            <person name="Yirmiya E."/>
            <person name="Nesher S."/>
            <person name="Brandis A."/>
            <person name="Mehlman T."/>
            <person name="Itkin M."/>
            <person name="Malitsky S."/>
            <person name="Millman A."/>
            <person name="Melamed S."/>
            <person name="Sorek R."/>
        </authorList>
    </citation>
    <scope>FUNCTION</scope>
    <scope>FUNCTION IN VIRAL DEFENSE</scope>
    <scope>CATALYTIC ACTIVITY</scope>
    <scope>POSSIBLE PHOSPHORYLATION AT HIS-758</scope>
    <source>
        <strain>JD6301</strain>
    </source>
</reference>
<proteinExistence type="evidence at protein level"/>
<dbReference type="EC" id="2.7.13.3" evidence="6"/>
<dbReference type="EMBL" id="JDWH01000005">
    <property type="status" value="NOT_ANNOTATED_CDS"/>
    <property type="molecule type" value="Genomic_DNA"/>
</dbReference>
<dbReference type="RefSeq" id="WP_028016759.1">
    <property type="nucleotide sequence ID" value="NZ_JDWH01000005.1"/>
</dbReference>
<dbReference type="iPTMnet" id="P0DW71"/>
<dbReference type="GO" id="GO:0016740">
    <property type="term" value="F:transferase activity"/>
    <property type="evidence" value="ECO:0007669"/>
    <property type="project" value="UniProtKB-KW"/>
</dbReference>
<dbReference type="GO" id="GO:0051607">
    <property type="term" value="P:defense response to virus"/>
    <property type="evidence" value="ECO:0007669"/>
    <property type="project" value="UniProtKB-KW"/>
</dbReference>
<dbReference type="GO" id="GO:0000160">
    <property type="term" value="P:phosphorelay signal transduction system"/>
    <property type="evidence" value="ECO:0007669"/>
    <property type="project" value="UniProtKB-KW"/>
</dbReference>